<name>ARM22_HYDVU</name>
<sequence>MRSASLILFVAIVALTYARSYEDIKEEIRNEVENEILDDLEEENDELDDNAQEVSDPRARRWRRAFRRIRIRQVVPYIPHIIKAYQTGKK</sequence>
<organism evidence="6">
    <name type="scientific">Hydra vulgaris</name>
    <name type="common">Hydra</name>
    <name type="synonym">Hydra attenuata</name>
    <dbReference type="NCBI Taxonomy" id="6087"/>
    <lineage>
        <taxon>Eukaryota</taxon>
        <taxon>Metazoa</taxon>
        <taxon>Cnidaria</taxon>
        <taxon>Hydrozoa</taxon>
        <taxon>Hydroidolina</taxon>
        <taxon>Anthoathecata</taxon>
        <taxon>Aplanulata</taxon>
        <taxon>Hydridae</taxon>
        <taxon>Hydra</taxon>
    </lineage>
</organism>
<protein>
    <recommendedName>
        <fullName evidence="4">Arminin 7722</fullName>
    </recommendedName>
</protein>
<comment type="function">
    <text evidence="1">Antimicrobial peptide with a broad-spectrum antimicrobial activity. Keeps its antibacterial activity under a wide range of salt concentrations that mimic physiological conditions of human blood, which is surprising, since Hydra is an obligate freshwater animal with nearly no salt tolerance. Does not affect red blood cells.</text>
</comment>
<comment type="subcellular location">
    <subcellularLocation>
        <location evidence="1">Secreted</location>
    </subcellularLocation>
    <subcellularLocation>
        <location evidence="1">Target cell membrane</location>
    </subcellularLocation>
</comment>
<comment type="tissue specificity">
    <text evidence="3">Expressed in entodermal epithelium along the body column.</text>
</comment>
<comment type="similarity">
    <text evidence="5">Belongs to the arminin family.</text>
</comment>
<feature type="signal peptide" evidence="2">
    <location>
        <begin position="1"/>
        <end position="18"/>
    </location>
</feature>
<feature type="propeptide" id="PRO_0000461983" evidence="1">
    <location>
        <begin position="19"/>
        <end position="59"/>
    </location>
</feature>
<feature type="peptide" id="PRO_5004480760" description="Arminin 7722" evidence="1">
    <location>
        <begin position="60"/>
        <end position="87"/>
    </location>
</feature>
<feature type="modified residue" description="Threonine amide" evidence="1">
    <location>
        <position position="87"/>
    </location>
</feature>
<accession>R9UFE4</accession>
<keyword id="KW-0027">Amidation</keyword>
<keyword id="KW-0044">Antibiotic</keyword>
<keyword id="KW-0929">Antimicrobial</keyword>
<keyword id="KW-0391">Immunity</keyword>
<keyword id="KW-0399">Innate immunity</keyword>
<keyword id="KW-0472">Membrane</keyword>
<keyword id="KW-1185">Reference proteome</keyword>
<keyword id="KW-0964">Secreted</keyword>
<keyword id="KW-0732">Signal</keyword>
<keyword id="KW-1052">Target cell membrane</keyword>
<keyword id="KW-1053">Target membrane</keyword>
<proteinExistence type="evidence at transcript level"/>
<reference evidence="6" key="1">
    <citation type="journal article" date="2013" name="Proc. Natl. Acad. Sci. U.S.A.">
        <title>Distinct antimicrobial peptide expression determines host species-specific bacterial associations.</title>
        <authorList>
            <person name="Franzenburg S."/>
            <person name="Walter J."/>
            <person name="Kunzel S."/>
            <person name="Wang J."/>
            <person name="Baines J.F."/>
            <person name="Bosch T.C."/>
            <person name="Fraune S."/>
        </authorList>
    </citation>
    <scope>NUCLEOTIDE SEQUENCE [MRNA]</scope>
    <scope>TISSUE SPECIFICITY</scope>
    <source>
        <strain>AEP</strain>
    </source>
</reference>
<dbReference type="EMBL" id="KC701499">
    <property type="protein sequence ID" value="AGN53406.1"/>
    <property type="molecule type" value="mRNA"/>
</dbReference>
<dbReference type="RefSeq" id="XP_065653421.1">
    <property type="nucleotide sequence ID" value="XM_065797349.1"/>
</dbReference>
<dbReference type="GeneID" id="136080547"/>
<dbReference type="Proteomes" id="UP000694840">
    <property type="component" value="Unplaced"/>
</dbReference>
<dbReference type="GO" id="GO:0005576">
    <property type="term" value="C:extracellular region"/>
    <property type="evidence" value="ECO:0007669"/>
    <property type="project" value="UniProtKB-SubCell"/>
</dbReference>
<evidence type="ECO:0000250" key="1">
    <source>
        <dbReference type="UniProtKB" id="D2XUU4"/>
    </source>
</evidence>
<evidence type="ECO:0000255" key="2"/>
<evidence type="ECO:0000269" key="3">
    <source>
    </source>
</evidence>
<evidence type="ECO:0000303" key="4">
    <source>
    </source>
</evidence>
<evidence type="ECO:0000305" key="5"/>
<evidence type="ECO:0000312" key="6">
    <source>
        <dbReference type="EMBL" id="AGN53406.1"/>
    </source>
</evidence>